<proteinExistence type="inferred from homology"/>
<keyword id="KW-0227">DNA damage</keyword>
<keyword id="KW-0233">DNA recombination</keyword>
<keyword id="KW-0234">DNA repair</keyword>
<keyword id="KW-0255">Endonuclease</keyword>
<keyword id="KW-0378">Hydrolase</keyword>
<keyword id="KW-0479">Metal-binding</keyword>
<keyword id="KW-0540">Nuclease</keyword>
<keyword id="KW-0539">Nucleus</keyword>
<keyword id="KW-1185">Reference proteome</keyword>
<keyword id="KW-0862">Zinc</keyword>
<keyword id="KW-0863">Zinc-finger</keyword>
<gene>
    <name evidence="1" type="primary">SLX1</name>
    <name type="ordered locus">DEHA2B08030g</name>
</gene>
<dbReference type="EC" id="3.1.-.-" evidence="1"/>
<dbReference type="EMBL" id="CR382134">
    <property type="protein sequence ID" value="CAG85309.2"/>
    <property type="molecule type" value="Genomic_DNA"/>
</dbReference>
<dbReference type="RefSeq" id="XP_457305.2">
    <property type="nucleotide sequence ID" value="XM_457305.1"/>
</dbReference>
<dbReference type="SMR" id="Q6BWW4"/>
<dbReference type="FunCoup" id="Q6BWW4">
    <property type="interactions" value="432"/>
</dbReference>
<dbReference type="STRING" id="284592.Q6BWW4"/>
<dbReference type="GeneID" id="2913411"/>
<dbReference type="KEGG" id="dha:DEHA2B08030g"/>
<dbReference type="VEuPathDB" id="FungiDB:DEHA2B08030g"/>
<dbReference type="eggNOG" id="KOG3005">
    <property type="taxonomic scope" value="Eukaryota"/>
</dbReference>
<dbReference type="HOGENOM" id="CLU_030739_1_1_1"/>
<dbReference type="InParanoid" id="Q6BWW4"/>
<dbReference type="OMA" id="INPREER"/>
<dbReference type="OrthoDB" id="24645at2759"/>
<dbReference type="Proteomes" id="UP000000599">
    <property type="component" value="Chromosome B"/>
</dbReference>
<dbReference type="GO" id="GO:0033557">
    <property type="term" value="C:Slx1-Slx4 complex"/>
    <property type="evidence" value="ECO:0007669"/>
    <property type="project" value="UniProtKB-UniRule"/>
</dbReference>
<dbReference type="GO" id="GO:0017108">
    <property type="term" value="F:5'-flap endonuclease activity"/>
    <property type="evidence" value="ECO:0007669"/>
    <property type="project" value="EnsemblFungi"/>
</dbReference>
<dbReference type="GO" id="GO:0008821">
    <property type="term" value="F:crossover junction DNA endonuclease activity"/>
    <property type="evidence" value="ECO:0007669"/>
    <property type="project" value="TreeGrafter"/>
</dbReference>
<dbReference type="GO" id="GO:0008270">
    <property type="term" value="F:zinc ion binding"/>
    <property type="evidence" value="ECO:0007669"/>
    <property type="project" value="UniProtKB-KW"/>
</dbReference>
<dbReference type="GO" id="GO:0006261">
    <property type="term" value="P:DNA-templated DNA replication"/>
    <property type="evidence" value="ECO:0007669"/>
    <property type="project" value="EnsemblFungi"/>
</dbReference>
<dbReference type="GO" id="GO:0000724">
    <property type="term" value="P:double-strand break repair via homologous recombination"/>
    <property type="evidence" value="ECO:0007669"/>
    <property type="project" value="TreeGrafter"/>
</dbReference>
<dbReference type="CDD" id="cd10455">
    <property type="entry name" value="GIY-YIG_SLX1"/>
    <property type="match status" value="1"/>
</dbReference>
<dbReference type="Gene3D" id="3.40.1440.10">
    <property type="entry name" value="GIY-YIG endonuclease"/>
    <property type="match status" value="1"/>
</dbReference>
<dbReference type="Gene3D" id="3.30.40.10">
    <property type="entry name" value="Zinc/RING finger domain, C3HC4 (zinc finger)"/>
    <property type="match status" value="1"/>
</dbReference>
<dbReference type="HAMAP" id="MF_03100">
    <property type="entry name" value="Endonuc_su_Slx1"/>
    <property type="match status" value="1"/>
</dbReference>
<dbReference type="InterPro" id="IPR000305">
    <property type="entry name" value="GIY-YIG_endonuc"/>
</dbReference>
<dbReference type="InterPro" id="IPR035901">
    <property type="entry name" value="GIY-YIG_endonuc_sf"/>
</dbReference>
<dbReference type="InterPro" id="IPR027520">
    <property type="entry name" value="Slx1"/>
</dbReference>
<dbReference type="InterPro" id="IPR048749">
    <property type="entry name" value="SLX1_C"/>
</dbReference>
<dbReference type="InterPro" id="IPR050381">
    <property type="entry name" value="SLX1_endonuclease"/>
</dbReference>
<dbReference type="InterPro" id="IPR013083">
    <property type="entry name" value="Znf_RING/FYVE/PHD"/>
</dbReference>
<dbReference type="PANTHER" id="PTHR20208">
    <property type="entry name" value="STRUCTURE-SPECIFIC ENDONUCLEASE SUBUNIT SLX1"/>
    <property type="match status" value="1"/>
</dbReference>
<dbReference type="PANTHER" id="PTHR20208:SF10">
    <property type="entry name" value="STRUCTURE-SPECIFIC ENDONUCLEASE SUBUNIT SLX1"/>
    <property type="match status" value="1"/>
</dbReference>
<dbReference type="Pfam" id="PF01541">
    <property type="entry name" value="GIY-YIG"/>
    <property type="match status" value="1"/>
</dbReference>
<dbReference type="Pfam" id="PF21202">
    <property type="entry name" value="SLX1_C"/>
    <property type="match status" value="1"/>
</dbReference>
<dbReference type="SMART" id="SM00465">
    <property type="entry name" value="GIYc"/>
    <property type="match status" value="1"/>
</dbReference>
<dbReference type="SUPFAM" id="SSF82771">
    <property type="entry name" value="GIY-YIG endonuclease"/>
    <property type="match status" value="1"/>
</dbReference>
<dbReference type="PROSITE" id="PS50164">
    <property type="entry name" value="GIY_YIG"/>
    <property type="match status" value="1"/>
</dbReference>
<name>SLX1_DEBHA</name>
<reference key="1">
    <citation type="journal article" date="2004" name="Nature">
        <title>Genome evolution in yeasts.</title>
        <authorList>
            <person name="Dujon B."/>
            <person name="Sherman D."/>
            <person name="Fischer G."/>
            <person name="Durrens P."/>
            <person name="Casaregola S."/>
            <person name="Lafontaine I."/>
            <person name="de Montigny J."/>
            <person name="Marck C."/>
            <person name="Neuveglise C."/>
            <person name="Talla E."/>
            <person name="Goffard N."/>
            <person name="Frangeul L."/>
            <person name="Aigle M."/>
            <person name="Anthouard V."/>
            <person name="Babour A."/>
            <person name="Barbe V."/>
            <person name="Barnay S."/>
            <person name="Blanchin S."/>
            <person name="Beckerich J.-M."/>
            <person name="Beyne E."/>
            <person name="Bleykasten C."/>
            <person name="Boisrame A."/>
            <person name="Boyer J."/>
            <person name="Cattolico L."/>
            <person name="Confanioleri F."/>
            <person name="de Daruvar A."/>
            <person name="Despons L."/>
            <person name="Fabre E."/>
            <person name="Fairhead C."/>
            <person name="Ferry-Dumazet H."/>
            <person name="Groppi A."/>
            <person name="Hantraye F."/>
            <person name="Hennequin C."/>
            <person name="Jauniaux N."/>
            <person name="Joyet P."/>
            <person name="Kachouri R."/>
            <person name="Kerrest A."/>
            <person name="Koszul R."/>
            <person name="Lemaire M."/>
            <person name="Lesur I."/>
            <person name="Ma L."/>
            <person name="Muller H."/>
            <person name="Nicaud J.-M."/>
            <person name="Nikolski M."/>
            <person name="Oztas S."/>
            <person name="Ozier-Kalogeropoulos O."/>
            <person name="Pellenz S."/>
            <person name="Potier S."/>
            <person name="Richard G.-F."/>
            <person name="Straub M.-L."/>
            <person name="Suleau A."/>
            <person name="Swennen D."/>
            <person name="Tekaia F."/>
            <person name="Wesolowski-Louvel M."/>
            <person name="Westhof E."/>
            <person name="Wirth B."/>
            <person name="Zeniou-Meyer M."/>
            <person name="Zivanovic Y."/>
            <person name="Bolotin-Fukuhara M."/>
            <person name="Thierry A."/>
            <person name="Bouchier C."/>
            <person name="Caudron B."/>
            <person name="Scarpelli C."/>
            <person name="Gaillardin C."/>
            <person name="Weissenbach J."/>
            <person name="Wincker P."/>
            <person name="Souciet J.-L."/>
        </authorList>
    </citation>
    <scope>NUCLEOTIDE SEQUENCE [LARGE SCALE GENOMIC DNA]</scope>
    <source>
        <strain>ATCC 36239 / CBS 767 / BCRC 21394 / JCM 1990 / NBRC 0083 / IGC 2968</strain>
    </source>
</reference>
<organism>
    <name type="scientific">Debaryomyces hansenii (strain ATCC 36239 / CBS 767 / BCRC 21394 / JCM 1990 / NBRC 0083 / IGC 2968)</name>
    <name type="common">Yeast</name>
    <name type="synonym">Torulaspora hansenii</name>
    <dbReference type="NCBI Taxonomy" id="284592"/>
    <lineage>
        <taxon>Eukaryota</taxon>
        <taxon>Fungi</taxon>
        <taxon>Dikarya</taxon>
        <taxon>Ascomycota</taxon>
        <taxon>Saccharomycotina</taxon>
        <taxon>Pichiomycetes</taxon>
        <taxon>Debaryomycetaceae</taxon>
        <taxon>Debaryomyces</taxon>
    </lineage>
</organism>
<protein>
    <recommendedName>
        <fullName evidence="1">Structure-specific endonuclease subunit SLX1</fullName>
        <ecNumber evidence="1">3.1.-.-</ecNumber>
    </recommendedName>
</protein>
<accession>Q6BWW4</accession>
<evidence type="ECO:0000255" key="1">
    <source>
        <dbReference type="HAMAP-Rule" id="MF_03100"/>
    </source>
</evidence>
<comment type="function">
    <text evidence="1">Catalytic subunit of the SLX1-SLX4 structure-specific endonuclease that resolves DNA secondary structures generated during DNA repair and recombination. Has endonuclease activity towards branched DNA substrates, introducing single-strand cuts in duplex DNA close to junctions with ss-DNA.</text>
</comment>
<comment type="cofactor">
    <cofactor evidence="1">
        <name>a divalent metal cation</name>
        <dbReference type="ChEBI" id="CHEBI:60240"/>
    </cofactor>
</comment>
<comment type="subunit">
    <text evidence="1">Forms a heterodimer with SLX4.</text>
</comment>
<comment type="subcellular location">
    <subcellularLocation>
        <location evidence="1">Nucleus</location>
    </subcellularLocation>
</comment>
<comment type="similarity">
    <text evidence="1">Belongs to the SLX1 family.</text>
</comment>
<sequence>MDDNEEYDTKRKTRCGLHVHPDFYGVYLLRSVPKPKSFYIGSTPNPQRRLRQHNGELKNGGAYRTKKSGFRPWEMICLVYNFPSKNVALQFEHALQHPYQTRHIKSELRITHKRNSGNTLHHKLGNIRLLLGSSFFSRMGLKVLLFDPEVHSAWCINKFGVNVTDNVQVNVTRFEDYFSRDNNDESSGFSLSRQKESERIYFESSKKILFFDNQPCFICNETIDYQSESEVSFSSKLDVDAYLREGNMPLLAICYHENCRKLYHLSCLGLHFLEKGDELSNKTDSEEKLGDTVNYLTPLQGKCLSCNNFINWAKLSKMSTKLREYFLKDLLNTGATSQFIENDADD</sequence>
<feature type="chain" id="PRO_0000383783" description="Structure-specific endonuclease subunit SLX1">
    <location>
        <begin position="1"/>
        <end position="346"/>
    </location>
</feature>
<feature type="domain" description="GIY-YIG" evidence="1">
    <location>
        <begin position="22"/>
        <end position="105"/>
    </location>
</feature>
<feature type="zinc finger region" description="SLX1-type" evidence="1">
    <location>
        <begin position="216"/>
        <end position="306"/>
    </location>
</feature>